<evidence type="ECO:0000255" key="1">
    <source>
        <dbReference type="HAMAP-Rule" id="MF_00050"/>
    </source>
</evidence>
<organism>
    <name type="scientific">Ruegeria pomeroyi (strain ATCC 700808 / DSM 15171 / DSS-3)</name>
    <name type="common">Silicibacter pomeroyi</name>
    <dbReference type="NCBI Taxonomy" id="246200"/>
    <lineage>
        <taxon>Bacteria</taxon>
        <taxon>Pseudomonadati</taxon>
        <taxon>Pseudomonadota</taxon>
        <taxon>Alphaproteobacteria</taxon>
        <taxon>Rhodobacterales</taxon>
        <taxon>Roseobacteraceae</taxon>
        <taxon>Ruegeria</taxon>
    </lineage>
</organism>
<dbReference type="EMBL" id="CP000031">
    <property type="protein sequence ID" value="AAV95251.1"/>
    <property type="molecule type" value="Genomic_DNA"/>
</dbReference>
<dbReference type="RefSeq" id="WP_011047706.1">
    <property type="nucleotide sequence ID" value="NC_003911.12"/>
</dbReference>
<dbReference type="SMR" id="Q5LRZ5"/>
<dbReference type="STRING" id="246200.SPO1975"/>
<dbReference type="PaxDb" id="246200-SPO1975"/>
<dbReference type="KEGG" id="sil:SPO1975"/>
<dbReference type="eggNOG" id="COG0264">
    <property type="taxonomic scope" value="Bacteria"/>
</dbReference>
<dbReference type="HOGENOM" id="CLU_047155_0_2_5"/>
<dbReference type="OrthoDB" id="9808348at2"/>
<dbReference type="Proteomes" id="UP000001023">
    <property type="component" value="Chromosome"/>
</dbReference>
<dbReference type="GO" id="GO:0005737">
    <property type="term" value="C:cytoplasm"/>
    <property type="evidence" value="ECO:0007669"/>
    <property type="project" value="UniProtKB-SubCell"/>
</dbReference>
<dbReference type="GO" id="GO:0003746">
    <property type="term" value="F:translation elongation factor activity"/>
    <property type="evidence" value="ECO:0007669"/>
    <property type="project" value="UniProtKB-UniRule"/>
</dbReference>
<dbReference type="CDD" id="cd14275">
    <property type="entry name" value="UBA_EF-Ts"/>
    <property type="match status" value="1"/>
</dbReference>
<dbReference type="FunFam" id="1.10.286.20:FF:000001">
    <property type="entry name" value="Elongation factor Ts"/>
    <property type="match status" value="1"/>
</dbReference>
<dbReference type="FunFam" id="1.10.8.10:FF:000001">
    <property type="entry name" value="Elongation factor Ts"/>
    <property type="match status" value="1"/>
</dbReference>
<dbReference type="Gene3D" id="1.10.286.20">
    <property type="match status" value="1"/>
</dbReference>
<dbReference type="Gene3D" id="1.10.8.10">
    <property type="entry name" value="DNA helicase RuvA subunit, C-terminal domain"/>
    <property type="match status" value="1"/>
</dbReference>
<dbReference type="Gene3D" id="3.30.479.20">
    <property type="entry name" value="Elongation factor Ts, dimerisation domain"/>
    <property type="match status" value="2"/>
</dbReference>
<dbReference type="HAMAP" id="MF_00050">
    <property type="entry name" value="EF_Ts"/>
    <property type="match status" value="1"/>
</dbReference>
<dbReference type="InterPro" id="IPR036402">
    <property type="entry name" value="EF-Ts_dimer_sf"/>
</dbReference>
<dbReference type="InterPro" id="IPR001816">
    <property type="entry name" value="Transl_elong_EFTs/EF1B"/>
</dbReference>
<dbReference type="InterPro" id="IPR014039">
    <property type="entry name" value="Transl_elong_EFTs/EF1B_dimer"/>
</dbReference>
<dbReference type="InterPro" id="IPR018101">
    <property type="entry name" value="Transl_elong_Ts_CS"/>
</dbReference>
<dbReference type="InterPro" id="IPR009060">
    <property type="entry name" value="UBA-like_sf"/>
</dbReference>
<dbReference type="NCBIfam" id="TIGR00116">
    <property type="entry name" value="tsf"/>
    <property type="match status" value="1"/>
</dbReference>
<dbReference type="PANTHER" id="PTHR11741">
    <property type="entry name" value="ELONGATION FACTOR TS"/>
    <property type="match status" value="1"/>
</dbReference>
<dbReference type="PANTHER" id="PTHR11741:SF0">
    <property type="entry name" value="ELONGATION FACTOR TS, MITOCHONDRIAL"/>
    <property type="match status" value="1"/>
</dbReference>
<dbReference type="Pfam" id="PF00889">
    <property type="entry name" value="EF_TS"/>
    <property type="match status" value="1"/>
</dbReference>
<dbReference type="SUPFAM" id="SSF54713">
    <property type="entry name" value="Elongation factor Ts (EF-Ts), dimerisation domain"/>
    <property type="match status" value="2"/>
</dbReference>
<dbReference type="SUPFAM" id="SSF46934">
    <property type="entry name" value="UBA-like"/>
    <property type="match status" value="1"/>
</dbReference>
<dbReference type="PROSITE" id="PS01126">
    <property type="entry name" value="EF_TS_1"/>
    <property type="match status" value="1"/>
</dbReference>
<dbReference type="PROSITE" id="PS01127">
    <property type="entry name" value="EF_TS_2"/>
    <property type="match status" value="1"/>
</dbReference>
<keyword id="KW-0963">Cytoplasm</keyword>
<keyword id="KW-0251">Elongation factor</keyword>
<keyword id="KW-0648">Protein biosynthesis</keyword>
<keyword id="KW-1185">Reference proteome</keyword>
<sequence>MAITAALVKELRDSTGAGMMDAKKALTETDGDMEAAVDWLRTKGLAKAAKKSGRTAAEGLVAVVVEGGKGVAVEVNSETDFVAKNSDFQEMVGKIAAAALAADDVDALLAADLGGKSVADTLTAKIATIGENMSVRRLAKLEGETVVTYVHNAATTGMGKIGVLVAMKGGDEALGKQVAMHIAAVNPAALSEAEMDPVVVEKEKQVQMDIARESGKPEAVIEKMIEGRMKKFVAESTLLSQQFVVNPDLTVGAAAAEAGAEITGFVRLEVGEGIVVEKEDFAAEVAKAAQG</sequence>
<feature type="chain" id="PRO_0000161192" description="Elongation factor Ts">
    <location>
        <begin position="1"/>
        <end position="291"/>
    </location>
</feature>
<feature type="region of interest" description="Involved in Mg(2+) ion dislocation from EF-Tu" evidence="1">
    <location>
        <begin position="79"/>
        <end position="82"/>
    </location>
</feature>
<name>EFTS_RUEPO</name>
<protein>
    <recommendedName>
        <fullName evidence="1">Elongation factor Ts</fullName>
        <shortName evidence="1">EF-Ts</shortName>
    </recommendedName>
</protein>
<reference key="1">
    <citation type="journal article" date="2004" name="Nature">
        <title>Genome sequence of Silicibacter pomeroyi reveals adaptations to the marine environment.</title>
        <authorList>
            <person name="Moran M.A."/>
            <person name="Buchan A."/>
            <person name="Gonzalez J.M."/>
            <person name="Heidelberg J.F."/>
            <person name="Whitman W.B."/>
            <person name="Kiene R.P."/>
            <person name="Henriksen J.R."/>
            <person name="King G.M."/>
            <person name="Belas R."/>
            <person name="Fuqua C."/>
            <person name="Brinkac L.M."/>
            <person name="Lewis M."/>
            <person name="Johri S."/>
            <person name="Weaver B."/>
            <person name="Pai G."/>
            <person name="Eisen J.A."/>
            <person name="Rahe E."/>
            <person name="Sheldon W.M."/>
            <person name="Ye W."/>
            <person name="Miller T.R."/>
            <person name="Carlton J."/>
            <person name="Rasko D.A."/>
            <person name="Paulsen I.T."/>
            <person name="Ren Q."/>
            <person name="Daugherty S.C."/>
            <person name="DeBoy R.T."/>
            <person name="Dodson R.J."/>
            <person name="Durkin A.S."/>
            <person name="Madupu R."/>
            <person name="Nelson W.C."/>
            <person name="Sullivan S.A."/>
            <person name="Rosovitz M.J."/>
            <person name="Haft D.H."/>
            <person name="Selengut J."/>
            <person name="Ward N."/>
        </authorList>
    </citation>
    <scope>NUCLEOTIDE SEQUENCE [LARGE SCALE GENOMIC DNA]</scope>
    <source>
        <strain>ATCC 700808 / DSM 15171 / DSS-3</strain>
    </source>
</reference>
<reference key="2">
    <citation type="journal article" date="2014" name="Stand. Genomic Sci.">
        <title>An updated genome annotation for the model marine bacterium Ruegeria pomeroyi DSS-3.</title>
        <authorList>
            <person name="Rivers A.R."/>
            <person name="Smith C.B."/>
            <person name="Moran M.A."/>
        </authorList>
    </citation>
    <scope>GENOME REANNOTATION</scope>
    <source>
        <strain>ATCC 700808 / DSM 15171 / DSS-3</strain>
    </source>
</reference>
<comment type="function">
    <text evidence="1">Associates with the EF-Tu.GDP complex and induces the exchange of GDP to GTP. It remains bound to the aminoacyl-tRNA.EF-Tu.GTP complex up to the GTP hydrolysis stage on the ribosome.</text>
</comment>
<comment type="subcellular location">
    <subcellularLocation>
        <location evidence="1">Cytoplasm</location>
    </subcellularLocation>
</comment>
<comment type="similarity">
    <text evidence="1">Belongs to the EF-Ts family.</text>
</comment>
<proteinExistence type="inferred from homology"/>
<accession>Q5LRZ5</accession>
<gene>
    <name evidence="1" type="primary">tsf</name>
    <name type="ordered locus">SPO1975</name>
</gene>